<sequence length="290" mass="31750">MADSKQSNRDWAADDVDADELPPTTESTDANGITTIVSWKYNADDQKVKVTRRVRRRLQVSTVTQTMAERKQWPKFGLDKGKPPGPDRKTTIIGENLHFKIAPISKIQRVEPEPETAVKAPTGKAVVCRLCSGQHYTARCPFREQLAAIDNLNADGAEEEQVVVSGTLAAKGAGETGGKYVPPSQRAGATGAGDSMFRARDELPTLRVTSLSIDAEEDDLRALFQPFAKNGKLGRANIVRDRNTRVSKGLAFVSFESKRDAEAAMAHLNGRGYDSLILEVAWSQPRGERT</sequence>
<organism>
    <name type="scientific">Cryptococcus neoformans var. neoformans serotype D (strain B-3501A)</name>
    <name type="common">Filobasidiella neoformans</name>
    <dbReference type="NCBI Taxonomy" id="283643"/>
    <lineage>
        <taxon>Eukaryota</taxon>
        <taxon>Fungi</taxon>
        <taxon>Dikarya</taxon>
        <taxon>Basidiomycota</taxon>
        <taxon>Agaricomycotina</taxon>
        <taxon>Tremellomycetes</taxon>
        <taxon>Tremellales</taxon>
        <taxon>Cryptococcaceae</taxon>
        <taxon>Cryptococcus</taxon>
        <taxon>Cryptococcus neoformans species complex</taxon>
    </lineage>
</organism>
<protein>
    <recommendedName>
        <fullName evidence="1">Eukaryotic translation initiation factor 3 subunit G</fullName>
        <shortName evidence="1">eIF3g</shortName>
    </recommendedName>
    <alternativeName>
        <fullName evidence="1">Eukaryotic translation initiation factor 3 RNA-binding subunit</fullName>
        <shortName evidence="1">eIF-3 RNA-binding subunit</shortName>
    </alternativeName>
    <alternativeName>
        <fullName evidence="1">Translation initiation factor eIF3 p33 subunit homolog</fullName>
        <shortName evidence="1">eIF3 p33 homolog</shortName>
    </alternativeName>
</protein>
<dbReference type="EMBL" id="AAEY01000052">
    <property type="protein sequence ID" value="EAL18189.1"/>
    <property type="molecule type" value="Genomic_DNA"/>
</dbReference>
<dbReference type="RefSeq" id="XP_772836.1">
    <property type="nucleotide sequence ID" value="XM_767743.1"/>
</dbReference>
<dbReference type="SMR" id="P0CN53"/>
<dbReference type="EnsemblFungi" id="AAW46307">
    <property type="protein sequence ID" value="AAW46307"/>
    <property type="gene ID" value="CNK01460"/>
</dbReference>
<dbReference type="GeneID" id="4938904"/>
<dbReference type="KEGG" id="cnb:CNBK2070"/>
<dbReference type="VEuPathDB" id="FungiDB:CNBK2070"/>
<dbReference type="HOGENOM" id="CLU_034595_0_0_1"/>
<dbReference type="OrthoDB" id="8827at5206"/>
<dbReference type="GO" id="GO:0016282">
    <property type="term" value="C:eukaryotic 43S preinitiation complex"/>
    <property type="evidence" value="ECO:0007669"/>
    <property type="project" value="UniProtKB-UniRule"/>
</dbReference>
<dbReference type="GO" id="GO:0033290">
    <property type="term" value="C:eukaryotic 48S preinitiation complex"/>
    <property type="evidence" value="ECO:0007669"/>
    <property type="project" value="UniProtKB-UniRule"/>
</dbReference>
<dbReference type="GO" id="GO:0071540">
    <property type="term" value="C:eukaryotic translation initiation factor 3 complex, eIF3e"/>
    <property type="evidence" value="ECO:0007669"/>
    <property type="project" value="EnsemblFungi"/>
</dbReference>
<dbReference type="GO" id="GO:0071541">
    <property type="term" value="C:eukaryotic translation initiation factor 3 complex, eIF3m"/>
    <property type="evidence" value="ECO:0007669"/>
    <property type="project" value="EnsemblFungi"/>
</dbReference>
<dbReference type="GO" id="GO:0043614">
    <property type="term" value="C:multi-eIF complex"/>
    <property type="evidence" value="ECO:0007669"/>
    <property type="project" value="EnsemblFungi"/>
</dbReference>
<dbReference type="GO" id="GO:0003723">
    <property type="term" value="F:RNA binding"/>
    <property type="evidence" value="ECO:0007669"/>
    <property type="project" value="UniProtKB-UniRule"/>
</dbReference>
<dbReference type="GO" id="GO:0003743">
    <property type="term" value="F:translation initiation factor activity"/>
    <property type="evidence" value="ECO:0007669"/>
    <property type="project" value="UniProtKB-UniRule"/>
</dbReference>
<dbReference type="GO" id="GO:0001732">
    <property type="term" value="P:formation of cytoplasmic translation initiation complex"/>
    <property type="evidence" value="ECO:0007669"/>
    <property type="project" value="UniProtKB-UniRule"/>
</dbReference>
<dbReference type="GO" id="GO:0002188">
    <property type="term" value="P:translation reinitiation"/>
    <property type="evidence" value="ECO:0007669"/>
    <property type="project" value="EnsemblFungi"/>
</dbReference>
<dbReference type="GO" id="GO:0006415">
    <property type="term" value="P:translational termination"/>
    <property type="evidence" value="ECO:0007669"/>
    <property type="project" value="EnsemblFungi"/>
</dbReference>
<dbReference type="CDD" id="cd12933">
    <property type="entry name" value="eIF3G"/>
    <property type="match status" value="1"/>
</dbReference>
<dbReference type="CDD" id="cd12408">
    <property type="entry name" value="RRM_eIF3G_like"/>
    <property type="match status" value="1"/>
</dbReference>
<dbReference type="FunFam" id="3.30.70.330:FF:000657">
    <property type="entry name" value="Eukaryotic translation initiation factor 3 subunit G"/>
    <property type="match status" value="1"/>
</dbReference>
<dbReference type="Gene3D" id="3.30.70.330">
    <property type="match status" value="1"/>
</dbReference>
<dbReference type="HAMAP" id="MF_03006">
    <property type="entry name" value="eIF3g"/>
    <property type="match status" value="1"/>
</dbReference>
<dbReference type="InterPro" id="IPR017334">
    <property type="entry name" value="eIF3_g"/>
</dbReference>
<dbReference type="InterPro" id="IPR024675">
    <property type="entry name" value="eIF3g_N"/>
</dbReference>
<dbReference type="InterPro" id="IPR034240">
    <property type="entry name" value="eIF3G_RRM"/>
</dbReference>
<dbReference type="InterPro" id="IPR012677">
    <property type="entry name" value="Nucleotide-bd_a/b_plait_sf"/>
</dbReference>
<dbReference type="InterPro" id="IPR035979">
    <property type="entry name" value="RBD_domain_sf"/>
</dbReference>
<dbReference type="InterPro" id="IPR000504">
    <property type="entry name" value="RRM_dom"/>
</dbReference>
<dbReference type="PANTHER" id="PTHR10352">
    <property type="entry name" value="EUKARYOTIC TRANSLATION INITIATION FACTOR 3 SUBUNIT G"/>
    <property type="match status" value="1"/>
</dbReference>
<dbReference type="Pfam" id="PF12353">
    <property type="entry name" value="eIF3g"/>
    <property type="match status" value="1"/>
</dbReference>
<dbReference type="Pfam" id="PF00076">
    <property type="entry name" value="RRM_1"/>
    <property type="match status" value="1"/>
</dbReference>
<dbReference type="PIRSF" id="PIRSF037949">
    <property type="entry name" value="Transl_init_eIF-3_RNA-bind"/>
    <property type="match status" value="1"/>
</dbReference>
<dbReference type="SMART" id="SM00360">
    <property type="entry name" value="RRM"/>
    <property type="match status" value="1"/>
</dbReference>
<dbReference type="SUPFAM" id="SSF54928">
    <property type="entry name" value="RNA-binding domain, RBD"/>
    <property type="match status" value="1"/>
</dbReference>
<dbReference type="PROSITE" id="PS50102">
    <property type="entry name" value="RRM"/>
    <property type="match status" value="1"/>
</dbReference>
<keyword id="KW-0963">Cytoplasm</keyword>
<keyword id="KW-0396">Initiation factor</keyword>
<keyword id="KW-0648">Protein biosynthesis</keyword>
<keyword id="KW-0694">RNA-binding</keyword>
<accession>P0CN53</accession>
<accession>Q55JX6</accession>
<accession>Q5K9M4</accession>
<feature type="chain" id="PRO_0000410080" description="Eukaryotic translation initiation factor 3 subunit G">
    <location>
        <begin position="1"/>
        <end position="290"/>
    </location>
</feature>
<feature type="domain" description="RRM" evidence="1">
    <location>
        <begin position="204"/>
        <end position="285"/>
    </location>
</feature>
<feature type="region of interest" description="Disordered" evidence="2">
    <location>
        <begin position="1"/>
        <end position="30"/>
    </location>
</feature>
<feature type="region of interest" description="Disordered" evidence="2">
    <location>
        <begin position="173"/>
        <end position="192"/>
    </location>
</feature>
<feature type="compositionally biased region" description="Basic and acidic residues" evidence="2">
    <location>
        <begin position="1"/>
        <end position="12"/>
    </location>
</feature>
<gene>
    <name evidence="1" type="primary">TIF35</name>
    <name type="ordered locus">CNBK2070</name>
</gene>
<comment type="function">
    <text evidence="1">RNA-binding component of the eukaryotic translation initiation factor 3 (eIF-3) complex, which is involved in protein synthesis of a specialized repertoire of mRNAs and, together with other initiation factors, stimulates binding of mRNA and methionyl-tRNAi to the 40S ribosome. The eIF-3 complex specifically targets and initiates translation of a subset of mRNAs involved in cell proliferation. This subunit can bind 18S rRNA.</text>
</comment>
<comment type="subunit">
    <text evidence="1">Component of the eukaryotic translation initiation factor 3 (eIF-3) complex.</text>
</comment>
<comment type="subcellular location">
    <subcellularLocation>
        <location evidence="1">Cytoplasm</location>
    </subcellularLocation>
</comment>
<comment type="similarity">
    <text evidence="1">Belongs to the eIF-3 subunit G family.</text>
</comment>
<reference key="1">
    <citation type="journal article" date="2005" name="Science">
        <title>The genome of the basidiomycetous yeast and human pathogen Cryptococcus neoformans.</title>
        <authorList>
            <person name="Loftus B.J."/>
            <person name="Fung E."/>
            <person name="Roncaglia P."/>
            <person name="Rowley D."/>
            <person name="Amedeo P."/>
            <person name="Bruno D."/>
            <person name="Vamathevan J."/>
            <person name="Miranda M."/>
            <person name="Anderson I.J."/>
            <person name="Fraser J.A."/>
            <person name="Allen J.E."/>
            <person name="Bosdet I.E."/>
            <person name="Brent M.R."/>
            <person name="Chiu R."/>
            <person name="Doering T.L."/>
            <person name="Donlin M.J."/>
            <person name="D'Souza C.A."/>
            <person name="Fox D.S."/>
            <person name="Grinberg V."/>
            <person name="Fu J."/>
            <person name="Fukushima M."/>
            <person name="Haas B.J."/>
            <person name="Huang J.C."/>
            <person name="Janbon G."/>
            <person name="Jones S.J.M."/>
            <person name="Koo H.L."/>
            <person name="Krzywinski M.I."/>
            <person name="Kwon-Chung K.J."/>
            <person name="Lengeler K.B."/>
            <person name="Maiti R."/>
            <person name="Marra M.A."/>
            <person name="Marra R.E."/>
            <person name="Mathewson C.A."/>
            <person name="Mitchell T.G."/>
            <person name="Pertea M."/>
            <person name="Riggs F.R."/>
            <person name="Salzberg S.L."/>
            <person name="Schein J.E."/>
            <person name="Shvartsbeyn A."/>
            <person name="Shin H."/>
            <person name="Shumway M."/>
            <person name="Specht C.A."/>
            <person name="Suh B.B."/>
            <person name="Tenney A."/>
            <person name="Utterback T.R."/>
            <person name="Wickes B.L."/>
            <person name="Wortman J.R."/>
            <person name="Wye N.H."/>
            <person name="Kronstad J.W."/>
            <person name="Lodge J.K."/>
            <person name="Heitman J."/>
            <person name="Davis R.W."/>
            <person name="Fraser C.M."/>
            <person name="Hyman R.W."/>
        </authorList>
    </citation>
    <scope>NUCLEOTIDE SEQUENCE [LARGE SCALE GENOMIC DNA]</scope>
    <source>
        <strain>B-3501A</strain>
    </source>
</reference>
<proteinExistence type="inferred from homology"/>
<evidence type="ECO:0000255" key="1">
    <source>
        <dbReference type="HAMAP-Rule" id="MF_03006"/>
    </source>
</evidence>
<evidence type="ECO:0000256" key="2">
    <source>
        <dbReference type="SAM" id="MobiDB-lite"/>
    </source>
</evidence>
<name>EIF3G_CRYNB</name>